<reference key="1">
    <citation type="submission" date="2007-09" db="EMBL/GenBank/DDBJ databases">
        <title>Complete sequence of chromosome of Serratia proteamaculans 568.</title>
        <authorList>
            <consortium name="US DOE Joint Genome Institute"/>
            <person name="Copeland A."/>
            <person name="Lucas S."/>
            <person name="Lapidus A."/>
            <person name="Barry K."/>
            <person name="Glavina del Rio T."/>
            <person name="Dalin E."/>
            <person name="Tice H."/>
            <person name="Pitluck S."/>
            <person name="Chain P."/>
            <person name="Malfatti S."/>
            <person name="Shin M."/>
            <person name="Vergez L."/>
            <person name="Schmutz J."/>
            <person name="Larimer F."/>
            <person name="Land M."/>
            <person name="Hauser L."/>
            <person name="Kyrpides N."/>
            <person name="Kim E."/>
            <person name="Taghavi S."/>
            <person name="Newman L."/>
            <person name="Vangronsveld J."/>
            <person name="van der Lelie D."/>
            <person name="Richardson P."/>
        </authorList>
    </citation>
    <scope>NUCLEOTIDE SEQUENCE [LARGE SCALE GENOMIC DNA]</scope>
    <source>
        <strain>568</strain>
    </source>
</reference>
<evidence type="ECO:0000255" key="1">
    <source>
        <dbReference type="HAMAP-Rule" id="MF_00195"/>
    </source>
</evidence>
<organism>
    <name type="scientific">Serratia proteamaculans (strain 568)</name>
    <dbReference type="NCBI Taxonomy" id="399741"/>
    <lineage>
        <taxon>Bacteria</taxon>
        <taxon>Pseudomonadati</taxon>
        <taxon>Pseudomonadota</taxon>
        <taxon>Gammaproteobacteria</taxon>
        <taxon>Enterobacterales</taxon>
        <taxon>Yersiniaceae</taxon>
        <taxon>Serratia</taxon>
    </lineage>
</organism>
<sequence length="494" mass="54877">MIPVVALVGRPNVGKSTLFNRLTHTRDALVADFPGLTRDRKYGRAEVEGNEFIIVDTGGIDGTEDGVETRMAGQSLLAIEEADIVLFMVDARAGLMPADLGIAQHLRNRQKATFLVANKTDGMDPDMAAADFYSLGLGDVHPIAASHGRGVAQLIEHVLVPFVGEKPEEVELTEEEANAAYWAEQEGETLEGAEEEPEDDFNPQDLPIKLAIVGRPNVGKSTLTNRILGEDRVVVYDMPGTTRDSIYIPMVRDEREYVLIDTAGVRKRGKVTETVEKFSVIKTLQAIEDANVVLLVVDAREGISDQDLSLLGFILNSGRSLVIVVNKWDGMSEEDRDHVKEMLDLRLGFVDFARIHFISALHGSGVGNLFVSVLEAYECATRRVNTSMLTKIMQMAADDHQPPLVRGRRVKLKYAHAGGYNPPIVVIHGNQVTDLSDSYKRYLMNYFRRSLKVMGTPIRIQFKEGENPFAGKRNLLTPNQMRKRKRLMSHLKKG</sequence>
<name>DER_SERP5</name>
<feature type="chain" id="PRO_1000058527" description="GTPase Der">
    <location>
        <begin position="1"/>
        <end position="494"/>
    </location>
</feature>
<feature type="domain" description="EngA-type G 1">
    <location>
        <begin position="3"/>
        <end position="166"/>
    </location>
</feature>
<feature type="domain" description="EngA-type G 2">
    <location>
        <begin position="208"/>
        <end position="381"/>
    </location>
</feature>
<feature type="domain" description="KH-like" evidence="1">
    <location>
        <begin position="382"/>
        <end position="466"/>
    </location>
</feature>
<feature type="binding site" evidence="1">
    <location>
        <begin position="9"/>
        <end position="16"/>
    </location>
    <ligand>
        <name>GTP</name>
        <dbReference type="ChEBI" id="CHEBI:37565"/>
        <label>1</label>
    </ligand>
</feature>
<feature type="binding site" evidence="1">
    <location>
        <begin position="56"/>
        <end position="60"/>
    </location>
    <ligand>
        <name>GTP</name>
        <dbReference type="ChEBI" id="CHEBI:37565"/>
        <label>1</label>
    </ligand>
</feature>
<feature type="binding site" evidence="1">
    <location>
        <begin position="118"/>
        <end position="121"/>
    </location>
    <ligand>
        <name>GTP</name>
        <dbReference type="ChEBI" id="CHEBI:37565"/>
        <label>1</label>
    </ligand>
</feature>
<feature type="binding site" evidence="1">
    <location>
        <begin position="214"/>
        <end position="221"/>
    </location>
    <ligand>
        <name>GTP</name>
        <dbReference type="ChEBI" id="CHEBI:37565"/>
        <label>2</label>
    </ligand>
</feature>
<feature type="binding site" evidence="1">
    <location>
        <begin position="261"/>
        <end position="265"/>
    </location>
    <ligand>
        <name>GTP</name>
        <dbReference type="ChEBI" id="CHEBI:37565"/>
        <label>2</label>
    </ligand>
</feature>
<feature type="binding site" evidence="1">
    <location>
        <begin position="326"/>
        <end position="329"/>
    </location>
    <ligand>
        <name>GTP</name>
        <dbReference type="ChEBI" id="CHEBI:37565"/>
        <label>2</label>
    </ligand>
</feature>
<dbReference type="EMBL" id="CP000826">
    <property type="protein sequence ID" value="ABV42701.1"/>
    <property type="molecule type" value="Genomic_DNA"/>
</dbReference>
<dbReference type="SMR" id="A8GHW1"/>
<dbReference type="STRING" id="399741.Spro_3605"/>
<dbReference type="KEGG" id="spe:Spro_3605"/>
<dbReference type="eggNOG" id="COG1160">
    <property type="taxonomic scope" value="Bacteria"/>
</dbReference>
<dbReference type="HOGENOM" id="CLU_016077_5_1_6"/>
<dbReference type="OrthoDB" id="9805918at2"/>
<dbReference type="GO" id="GO:0005525">
    <property type="term" value="F:GTP binding"/>
    <property type="evidence" value="ECO:0007669"/>
    <property type="project" value="UniProtKB-UniRule"/>
</dbReference>
<dbReference type="GO" id="GO:0043022">
    <property type="term" value="F:ribosome binding"/>
    <property type="evidence" value="ECO:0007669"/>
    <property type="project" value="TreeGrafter"/>
</dbReference>
<dbReference type="GO" id="GO:0042254">
    <property type="term" value="P:ribosome biogenesis"/>
    <property type="evidence" value="ECO:0007669"/>
    <property type="project" value="UniProtKB-KW"/>
</dbReference>
<dbReference type="CDD" id="cd01894">
    <property type="entry name" value="EngA1"/>
    <property type="match status" value="1"/>
</dbReference>
<dbReference type="CDD" id="cd01895">
    <property type="entry name" value="EngA2"/>
    <property type="match status" value="1"/>
</dbReference>
<dbReference type="FunFam" id="3.30.300.20:FF:000004">
    <property type="entry name" value="GTPase Der"/>
    <property type="match status" value="1"/>
</dbReference>
<dbReference type="FunFam" id="3.40.50.300:FF:000040">
    <property type="entry name" value="GTPase Der"/>
    <property type="match status" value="1"/>
</dbReference>
<dbReference type="FunFam" id="3.40.50.300:FF:000057">
    <property type="entry name" value="GTPase Der"/>
    <property type="match status" value="1"/>
</dbReference>
<dbReference type="Gene3D" id="3.30.300.20">
    <property type="match status" value="1"/>
</dbReference>
<dbReference type="Gene3D" id="3.40.50.300">
    <property type="entry name" value="P-loop containing nucleotide triphosphate hydrolases"/>
    <property type="match status" value="2"/>
</dbReference>
<dbReference type="HAMAP" id="MF_00195">
    <property type="entry name" value="GTPase_Der"/>
    <property type="match status" value="1"/>
</dbReference>
<dbReference type="InterPro" id="IPR031166">
    <property type="entry name" value="G_ENGA"/>
</dbReference>
<dbReference type="InterPro" id="IPR006073">
    <property type="entry name" value="GTP-bd"/>
</dbReference>
<dbReference type="InterPro" id="IPR016484">
    <property type="entry name" value="GTPase_Der"/>
</dbReference>
<dbReference type="InterPro" id="IPR032859">
    <property type="entry name" value="KH_dom-like"/>
</dbReference>
<dbReference type="InterPro" id="IPR015946">
    <property type="entry name" value="KH_dom-like_a/b"/>
</dbReference>
<dbReference type="InterPro" id="IPR027417">
    <property type="entry name" value="P-loop_NTPase"/>
</dbReference>
<dbReference type="InterPro" id="IPR005225">
    <property type="entry name" value="Small_GTP-bd"/>
</dbReference>
<dbReference type="NCBIfam" id="TIGR03594">
    <property type="entry name" value="GTPase_EngA"/>
    <property type="match status" value="1"/>
</dbReference>
<dbReference type="NCBIfam" id="TIGR00231">
    <property type="entry name" value="small_GTP"/>
    <property type="match status" value="2"/>
</dbReference>
<dbReference type="PANTHER" id="PTHR43834">
    <property type="entry name" value="GTPASE DER"/>
    <property type="match status" value="1"/>
</dbReference>
<dbReference type="PANTHER" id="PTHR43834:SF6">
    <property type="entry name" value="GTPASE DER"/>
    <property type="match status" value="1"/>
</dbReference>
<dbReference type="Pfam" id="PF14714">
    <property type="entry name" value="KH_dom-like"/>
    <property type="match status" value="1"/>
</dbReference>
<dbReference type="Pfam" id="PF01926">
    <property type="entry name" value="MMR_HSR1"/>
    <property type="match status" value="2"/>
</dbReference>
<dbReference type="PIRSF" id="PIRSF006485">
    <property type="entry name" value="GTP-binding_EngA"/>
    <property type="match status" value="1"/>
</dbReference>
<dbReference type="PRINTS" id="PR00326">
    <property type="entry name" value="GTP1OBG"/>
</dbReference>
<dbReference type="SUPFAM" id="SSF52540">
    <property type="entry name" value="P-loop containing nucleoside triphosphate hydrolases"/>
    <property type="match status" value="2"/>
</dbReference>
<dbReference type="PROSITE" id="PS51712">
    <property type="entry name" value="G_ENGA"/>
    <property type="match status" value="2"/>
</dbReference>
<keyword id="KW-0342">GTP-binding</keyword>
<keyword id="KW-0547">Nucleotide-binding</keyword>
<keyword id="KW-0677">Repeat</keyword>
<keyword id="KW-0690">Ribosome biogenesis</keyword>
<protein>
    <recommendedName>
        <fullName evidence="1">GTPase Der</fullName>
    </recommendedName>
    <alternativeName>
        <fullName evidence="1">GTP-binding protein EngA</fullName>
    </alternativeName>
</protein>
<comment type="function">
    <text evidence="1">GTPase that plays an essential role in the late steps of ribosome biogenesis.</text>
</comment>
<comment type="subunit">
    <text evidence="1">Associates with the 50S ribosomal subunit.</text>
</comment>
<comment type="similarity">
    <text evidence="1">Belongs to the TRAFAC class TrmE-Era-EngA-EngB-Septin-like GTPase superfamily. EngA (Der) GTPase family.</text>
</comment>
<gene>
    <name evidence="1" type="primary">der</name>
    <name type="synonym">engA</name>
    <name type="ordered locus">Spro_3605</name>
</gene>
<proteinExistence type="inferred from homology"/>
<accession>A8GHW1</accession>